<gene>
    <name evidence="1" type="primary">dapB</name>
    <name type="ordered locus">BLi02384</name>
    <name type="ordered locus">BL02758</name>
</gene>
<reference key="1">
    <citation type="journal article" date="2004" name="J. Mol. Microbiol. Biotechnol.">
        <title>The complete genome sequence of Bacillus licheniformis DSM13, an organism with great industrial potential.</title>
        <authorList>
            <person name="Veith B."/>
            <person name="Herzberg C."/>
            <person name="Steckel S."/>
            <person name="Feesche J."/>
            <person name="Maurer K.H."/>
            <person name="Ehrenreich P."/>
            <person name="Baeumer S."/>
            <person name="Henne A."/>
            <person name="Liesegang H."/>
            <person name="Merkl R."/>
            <person name="Ehrenreich A."/>
            <person name="Gottschalk G."/>
        </authorList>
    </citation>
    <scope>NUCLEOTIDE SEQUENCE [LARGE SCALE GENOMIC DNA]</scope>
    <source>
        <strain>ATCC 14580 / DSM 13 / JCM 2505 / CCUG 7422 / NBRC 12200 / NCIMB 9375 / NCTC 10341 / NRRL NRS-1264 / Gibson 46</strain>
    </source>
</reference>
<reference key="2">
    <citation type="journal article" date="2004" name="Genome Biol.">
        <title>Complete genome sequence of the industrial bacterium Bacillus licheniformis and comparisons with closely related Bacillus species.</title>
        <authorList>
            <person name="Rey M.W."/>
            <person name="Ramaiya P."/>
            <person name="Nelson B.A."/>
            <person name="Brody-Karpin S.D."/>
            <person name="Zaretsky E.J."/>
            <person name="Tang M."/>
            <person name="Lopez de Leon A."/>
            <person name="Xiang H."/>
            <person name="Gusti V."/>
            <person name="Clausen I.G."/>
            <person name="Olsen P.B."/>
            <person name="Rasmussen M.D."/>
            <person name="Andersen J.T."/>
            <person name="Joergensen P.L."/>
            <person name="Larsen T.S."/>
            <person name="Sorokin A."/>
            <person name="Bolotin A."/>
            <person name="Lapidus A."/>
            <person name="Galleron N."/>
            <person name="Ehrlich S.D."/>
            <person name="Berka R.M."/>
        </authorList>
    </citation>
    <scope>NUCLEOTIDE SEQUENCE [LARGE SCALE GENOMIC DNA]</scope>
    <source>
        <strain>ATCC 14580 / DSM 13 / JCM 2505 / CCUG 7422 / NBRC 12200 / NCIMB 9375 / NCTC 10341 / NRRL NRS-1264 / Gibson 46</strain>
    </source>
</reference>
<comment type="function">
    <text evidence="1">Catalyzes the conversion of 4-hydroxy-tetrahydrodipicolinate (HTPA) to tetrahydrodipicolinate.</text>
</comment>
<comment type="catalytic activity">
    <reaction evidence="1">
        <text>(S)-2,3,4,5-tetrahydrodipicolinate + NAD(+) + H2O = (2S,4S)-4-hydroxy-2,3,4,5-tetrahydrodipicolinate + NADH + H(+)</text>
        <dbReference type="Rhea" id="RHEA:35323"/>
        <dbReference type="ChEBI" id="CHEBI:15377"/>
        <dbReference type="ChEBI" id="CHEBI:15378"/>
        <dbReference type="ChEBI" id="CHEBI:16845"/>
        <dbReference type="ChEBI" id="CHEBI:57540"/>
        <dbReference type="ChEBI" id="CHEBI:57945"/>
        <dbReference type="ChEBI" id="CHEBI:67139"/>
        <dbReference type="EC" id="1.17.1.8"/>
    </reaction>
</comment>
<comment type="catalytic activity">
    <reaction evidence="1">
        <text>(S)-2,3,4,5-tetrahydrodipicolinate + NADP(+) + H2O = (2S,4S)-4-hydroxy-2,3,4,5-tetrahydrodipicolinate + NADPH + H(+)</text>
        <dbReference type="Rhea" id="RHEA:35331"/>
        <dbReference type="ChEBI" id="CHEBI:15377"/>
        <dbReference type="ChEBI" id="CHEBI:15378"/>
        <dbReference type="ChEBI" id="CHEBI:16845"/>
        <dbReference type="ChEBI" id="CHEBI:57783"/>
        <dbReference type="ChEBI" id="CHEBI:58349"/>
        <dbReference type="ChEBI" id="CHEBI:67139"/>
        <dbReference type="EC" id="1.17.1.8"/>
    </reaction>
</comment>
<comment type="pathway">
    <text evidence="1">Amino-acid biosynthesis; L-lysine biosynthesis via DAP pathway; (S)-tetrahydrodipicolinate from L-aspartate: step 4/4.</text>
</comment>
<comment type="subcellular location">
    <subcellularLocation>
        <location evidence="1">Cytoplasm</location>
    </subcellularLocation>
</comment>
<comment type="similarity">
    <text evidence="1">Belongs to the DapB family.</text>
</comment>
<comment type="caution">
    <text evidence="2">Was originally thought to be a dihydrodipicolinate reductase (DHDPR), catalyzing the conversion of dihydrodipicolinate to tetrahydrodipicolinate. However, it was shown in E.coli that the substrate of the enzymatic reaction is not dihydrodipicolinate (DHDP) but in fact (2S,4S)-4-hydroxy-2,3,4,5-tetrahydrodipicolinic acid (HTPA), the product released by the DapA-catalyzed reaction.</text>
</comment>
<proteinExistence type="inferred from homology"/>
<feature type="chain" id="PRO_0000228324" description="4-hydroxy-tetrahydrodipicolinate reductase">
    <location>
        <begin position="1"/>
        <end position="267"/>
    </location>
</feature>
<feature type="active site" description="Proton donor/acceptor" evidence="1">
    <location>
        <position position="156"/>
    </location>
</feature>
<feature type="active site" description="Proton donor" evidence="1">
    <location>
        <position position="160"/>
    </location>
</feature>
<feature type="binding site" evidence="1">
    <location>
        <begin position="12"/>
        <end position="17"/>
    </location>
    <ligand>
        <name>NAD(+)</name>
        <dbReference type="ChEBI" id="CHEBI:57540"/>
    </ligand>
</feature>
<feature type="binding site" evidence="1">
    <location>
        <begin position="100"/>
        <end position="102"/>
    </location>
    <ligand>
        <name>NAD(+)</name>
        <dbReference type="ChEBI" id="CHEBI:57540"/>
    </ligand>
</feature>
<feature type="binding site" evidence="1">
    <location>
        <begin position="126"/>
        <end position="129"/>
    </location>
    <ligand>
        <name>NAD(+)</name>
        <dbReference type="ChEBI" id="CHEBI:57540"/>
    </ligand>
</feature>
<feature type="binding site" evidence="1">
    <location>
        <position position="157"/>
    </location>
    <ligand>
        <name>(S)-2,3,4,5-tetrahydrodipicolinate</name>
        <dbReference type="ChEBI" id="CHEBI:16845"/>
    </ligand>
</feature>
<feature type="binding site" evidence="1">
    <location>
        <begin position="166"/>
        <end position="167"/>
    </location>
    <ligand>
        <name>(S)-2,3,4,5-tetrahydrodipicolinate</name>
        <dbReference type="ChEBI" id="CHEBI:16845"/>
    </ligand>
</feature>
<keyword id="KW-0028">Amino-acid biosynthesis</keyword>
<keyword id="KW-0963">Cytoplasm</keyword>
<keyword id="KW-0220">Diaminopimelate biosynthesis</keyword>
<keyword id="KW-0457">Lysine biosynthesis</keyword>
<keyword id="KW-0520">NAD</keyword>
<keyword id="KW-0521">NADP</keyword>
<keyword id="KW-0560">Oxidoreductase</keyword>
<keyword id="KW-1185">Reference proteome</keyword>
<organism>
    <name type="scientific">Bacillus licheniformis (strain ATCC 14580 / DSM 13 / JCM 2505 / CCUG 7422 / NBRC 12200 / NCIMB 9375 / NCTC 10341 / NRRL NRS-1264 / Gibson 46)</name>
    <dbReference type="NCBI Taxonomy" id="279010"/>
    <lineage>
        <taxon>Bacteria</taxon>
        <taxon>Bacillati</taxon>
        <taxon>Bacillota</taxon>
        <taxon>Bacilli</taxon>
        <taxon>Bacillales</taxon>
        <taxon>Bacillaceae</taxon>
        <taxon>Bacillus</taxon>
    </lineage>
</organism>
<sequence>MQKDTIKIAIAGPRGRMGSEAVKLVEDTAHFELVGAIDRTYNREKLSDVMTSSSDAVIYTDITECFSETSPDVLIDLTTPEIGKLHTKIALEHGVRPVVGTTGFSESDLNELMELTDEKGIGAIIAPNFALGAVLMMKFSQMAANYFTDVEIIEQHHDQKLDAPSGTALKTAEMISAVREAKTQGHPDEKEILPGARGADQNGIRLHSVRLPGLIAHQEVMFGGDGQTLKIRHDSYNRASFMSGVKLAVEQVMKIDQLVYGLENIIE</sequence>
<protein>
    <recommendedName>
        <fullName evidence="1">4-hydroxy-tetrahydrodipicolinate reductase</fullName>
        <shortName evidence="1">HTPA reductase</shortName>
        <ecNumber evidence="1">1.17.1.8</ecNumber>
    </recommendedName>
</protein>
<accession>Q65I50</accession>
<accession>Q62TJ9</accession>
<name>DAPB_BACLD</name>
<evidence type="ECO:0000255" key="1">
    <source>
        <dbReference type="HAMAP-Rule" id="MF_00102"/>
    </source>
</evidence>
<evidence type="ECO:0000305" key="2"/>
<dbReference type="EC" id="1.17.1.8" evidence="1"/>
<dbReference type="EMBL" id="AE017333">
    <property type="protein sequence ID" value="AAU41264.1"/>
    <property type="molecule type" value="Genomic_DNA"/>
</dbReference>
<dbReference type="EMBL" id="CP000002">
    <property type="protein sequence ID" value="AAU23910.1"/>
    <property type="molecule type" value="Genomic_DNA"/>
</dbReference>
<dbReference type="RefSeq" id="WP_003182939.1">
    <property type="nucleotide sequence ID" value="NC_006322.1"/>
</dbReference>
<dbReference type="SMR" id="Q65I50"/>
<dbReference type="STRING" id="279010.BL02758"/>
<dbReference type="GeneID" id="92861017"/>
<dbReference type="KEGG" id="bld:BLi02384"/>
<dbReference type="KEGG" id="bli:BL02758"/>
<dbReference type="eggNOG" id="COG0289">
    <property type="taxonomic scope" value="Bacteria"/>
</dbReference>
<dbReference type="HOGENOM" id="CLU_047479_0_1_9"/>
<dbReference type="UniPathway" id="UPA00034">
    <property type="reaction ID" value="UER00018"/>
</dbReference>
<dbReference type="Proteomes" id="UP000000606">
    <property type="component" value="Chromosome"/>
</dbReference>
<dbReference type="Bgee" id="BL02758">
    <property type="expression patterns" value="Expressed in larva"/>
</dbReference>
<dbReference type="GO" id="GO:0005829">
    <property type="term" value="C:cytosol"/>
    <property type="evidence" value="ECO:0007669"/>
    <property type="project" value="TreeGrafter"/>
</dbReference>
<dbReference type="GO" id="GO:0008839">
    <property type="term" value="F:4-hydroxy-tetrahydrodipicolinate reductase"/>
    <property type="evidence" value="ECO:0007669"/>
    <property type="project" value="UniProtKB-EC"/>
</dbReference>
<dbReference type="GO" id="GO:0051287">
    <property type="term" value="F:NAD binding"/>
    <property type="evidence" value="ECO:0007669"/>
    <property type="project" value="UniProtKB-UniRule"/>
</dbReference>
<dbReference type="GO" id="GO:0050661">
    <property type="term" value="F:NADP binding"/>
    <property type="evidence" value="ECO:0007669"/>
    <property type="project" value="UniProtKB-UniRule"/>
</dbReference>
<dbReference type="GO" id="GO:0016726">
    <property type="term" value="F:oxidoreductase activity, acting on CH or CH2 groups, NAD or NADP as acceptor"/>
    <property type="evidence" value="ECO:0007669"/>
    <property type="project" value="UniProtKB-UniRule"/>
</dbReference>
<dbReference type="GO" id="GO:0019877">
    <property type="term" value="P:diaminopimelate biosynthetic process"/>
    <property type="evidence" value="ECO:0007669"/>
    <property type="project" value="UniProtKB-UniRule"/>
</dbReference>
<dbReference type="GO" id="GO:0009089">
    <property type="term" value="P:lysine biosynthetic process via diaminopimelate"/>
    <property type="evidence" value="ECO:0007669"/>
    <property type="project" value="UniProtKB-UniRule"/>
</dbReference>
<dbReference type="CDD" id="cd02274">
    <property type="entry name" value="DHDPR_N"/>
    <property type="match status" value="1"/>
</dbReference>
<dbReference type="FunFam" id="3.30.360.10:FF:000009">
    <property type="entry name" value="4-hydroxy-tetrahydrodipicolinate reductase"/>
    <property type="match status" value="1"/>
</dbReference>
<dbReference type="FunFam" id="3.40.50.720:FF:000180">
    <property type="entry name" value="4-hydroxy-tetrahydrodipicolinate reductase"/>
    <property type="match status" value="1"/>
</dbReference>
<dbReference type="Gene3D" id="3.30.360.10">
    <property type="entry name" value="Dihydrodipicolinate Reductase, domain 2"/>
    <property type="match status" value="1"/>
</dbReference>
<dbReference type="Gene3D" id="3.40.50.720">
    <property type="entry name" value="NAD(P)-binding Rossmann-like Domain"/>
    <property type="match status" value="1"/>
</dbReference>
<dbReference type="HAMAP" id="MF_00102">
    <property type="entry name" value="DapB"/>
    <property type="match status" value="1"/>
</dbReference>
<dbReference type="InterPro" id="IPR022663">
    <property type="entry name" value="DapB_C"/>
</dbReference>
<dbReference type="InterPro" id="IPR000846">
    <property type="entry name" value="DapB_N"/>
</dbReference>
<dbReference type="InterPro" id="IPR022664">
    <property type="entry name" value="DapB_N_CS"/>
</dbReference>
<dbReference type="InterPro" id="IPR023940">
    <property type="entry name" value="DHDPR_bac"/>
</dbReference>
<dbReference type="InterPro" id="IPR036291">
    <property type="entry name" value="NAD(P)-bd_dom_sf"/>
</dbReference>
<dbReference type="NCBIfam" id="TIGR00036">
    <property type="entry name" value="dapB"/>
    <property type="match status" value="1"/>
</dbReference>
<dbReference type="PANTHER" id="PTHR20836:SF0">
    <property type="entry name" value="4-HYDROXY-TETRAHYDRODIPICOLINATE REDUCTASE 1, CHLOROPLASTIC-RELATED"/>
    <property type="match status" value="1"/>
</dbReference>
<dbReference type="PANTHER" id="PTHR20836">
    <property type="entry name" value="DIHYDRODIPICOLINATE REDUCTASE"/>
    <property type="match status" value="1"/>
</dbReference>
<dbReference type="Pfam" id="PF05173">
    <property type="entry name" value="DapB_C"/>
    <property type="match status" value="1"/>
</dbReference>
<dbReference type="Pfam" id="PF01113">
    <property type="entry name" value="DapB_N"/>
    <property type="match status" value="1"/>
</dbReference>
<dbReference type="PIRSF" id="PIRSF000161">
    <property type="entry name" value="DHPR"/>
    <property type="match status" value="1"/>
</dbReference>
<dbReference type="SUPFAM" id="SSF55347">
    <property type="entry name" value="Glyceraldehyde-3-phosphate dehydrogenase-like, C-terminal domain"/>
    <property type="match status" value="1"/>
</dbReference>
<dbReference type="SUPFAM" id="SSF51735">
    <property type="entry name" value="NAD(P)-binding Rossmann-fold domains"/>
    <property type="match status" value="1"/>
</dbReference>
<dbReference type="PROSITE" id="PS01298">
    <property type="entry name" value="DAPB"/>
    <property type="match status" value="1"/>
</dbReference>